<dbReference type="EC" id="2.6.1.7"/>
<dbReference type="EMBL" id="Z49335">
    <property type="protein sequence ID" value="CAA89351.1"/>
    <property type="molecule type" value="Genomic_DNA"/>
</dbReference>
<dbReference type="EMBL" id="BK006943">
    <property type="protein sequence ID" value="DAA08738.1"/>
    <property type="molecule type" value="Genomic_DNA"/>
</dbReference>
<dbReference type="PIR" id="S56832">
    <property type="entry name" value="S56832"/>
</dbReference>
<dbReference type="RefSeq" id="NP_012475.3">
    <property type="nucleotide sequence ID" value="NM_001181493.3"/>
</dbReference>
<dbReference type="PDB" id="3B46">
    <property type="method" value="X-ray"/>
    <property type="resolution" value="2.00 A"/>
    <property type="chains" value="A/B=1-444"/>
</dbReference>
<dbReference type="PDBsum" id="3B46"/>
<dbReference type="SMR" id="P47039"/>
<dbReference type="BioGRID" id="33694">
    <property type="interactions" value="98"/>
</dbReference>
<dbReference type="DIP" id="DIP-6723N"/>
<dbReference type="FunCoup" id="P47039">
    <property type="interactions" value="527"/>
</dbReference>
<dbReference type="IntAct" id="P47039">
    <property type="interactions" value="8"/>
</dbReference>
<dbReference type="MINT" id="P47039"/>
<dbReference type="STRING" id="4932.YJL060W"/>
<dbReference type="iPTMnet" id="P47039"/>
<dbReference type="PaxDb" id="4932-YJL060W"/>
<dbReference type="PeptideAtlas" id="P47039"/>
<dbReference type="EnsemblFungi" id="YJL060W_mRNA">
    <property type="protein sequence ID" value="YJL060W"/>
    <property type="gene ID" value="YJL060W"/>
</dbReference>
<dbReference type="GeneID" id="853386"/>
<dbReference type="KEGG" id="sce:YJL060W"/>
<dbReference type="AGR" id="SGD:S000003596"/>
<dbReference type="SGD" id="S000003596">
    <property type="gene designation" value="BNA3"/>
</dbReference>
<dbReference type="VEuPathDB" id="FungiDB:YJL060W"/>
<dbReference type="eggNOG" id="KOG0257">
    <property type="taxonomic scope" value="Eukaryota"/>
</dbReference>
<dbReference type="GeneTree" id="ENSGT00940000171422"/>
<dbReference type="HOGENOM" id="CLU_017584_4_0_1"/>
<dbReference type="InParanoid" id="P47039"/>
<dbReference type="OMA" id="PRDFKLC"/>
<dbReference type="OrthoDB" id="2414662at2759"/>
<dbReference type="BioCyc" id="MetaCyc:YJL060W-MONOMER"/>
<dbReference type="BioCyc" id="YEAST:YJL060W-MONOMER"/>
<dbReference type="BRENDA" id="2.6.1.7">
    <property type="organism ID" value="984"/>
</dbReference>
<dbReference type="Reactome" id="R-SCE-71240">
    <property type="pathway name" value="Tryptophan catabolism"/>
</dbReference>
<dbReference type="Reactome" id="R-SCE-8964208">
    <property type="pathway name" value="Phenylalanine metabolism"/>
</dbReference>
<dbReference type="Reactome" id="R-SCE-8964539">
    <property type="pathway name" value="Glutamate and glutamine metabolism"/>
</dbReference>
<dbReference type="UniPathway" id="UPA00334">
    <property type="reaction ID" value="UER00726"/>
</dbReference>
<dbReference type="BioGRID-ORCS" id="853386">
    <property type="hits" value="0 hits in 10 CRISPR screens"/>
</dbReference>
<dbReference type="EvolutionaryTrace" id="P47039"/>
<dbReference type="PRO" id="PR:P47039"/>
<dbReference type="Proteomes" id="UP000002311">
    <property type="component" value="Chromosome X"/>
</dbReference>
<dbReference type="RNAct" id="P47039">
    <property type="molecule type" value="protein"/>
</dbReference>
<dbReference type="GO" id="GO:0005737">
    <property type="term" value="C:cytoplasm"/>
    <property type="evidence" value="ECO:0000314"/>
    <property type="project" value="SGD"/>
</dbReference>
<dbReference type="GO" id="GO:0005739">
    <property type="term" value="C:mitochondrion"/>
    <property type="evidence" value="ECO:0000314"/>
    <property type="project" value="SGD"/>
</dbReference>
<dbReference type="GO" id="GO:0047536">
    <property type="term" value="F:2-aminoadipate transaminase activity"/>
    <property type="evidence" value="ECO:0000314"/>
    <property type="project" value="SGD"/>
</dbReference>
<dbReference type="GO" id="GO:0016212">
    <property type="term" value="F:kynurenine-oxoglutarate transaminase activity"/>
    <property type="evidence" value="ECO:0000314"/>
    <property type="project" value="SGD"/>
</dbReference>
<dbReference type="GO" id="GO:0030170">
    <property type="term" value="F:pyridoxal phosphate binding"/>
    <property type="evidence" value="ECO:0007669"/>
    <property type="project" value="InterPro"/>
</dbReference>
<dbReference type="GO" id="GO:0034276">
    <property type="term" value="P:kynurenic acid biosynthetic process"/>
    <property type="evidence" value="ECO:0000314"/>
    <property type="project" value="SGD"/>
</dbReference>
<dbReference type="GO" id="GO:0097053">
    <property type="term" value="P:L-kynurenine catabolic process"/>
    <property type="evidence" value="ECO:0007669"/>
    <property type="project" value="UniProtKB-UniPathway"/>
</dbReference>
<dbReference type="CDD" id="cd00609">
    <property type="entry name" value="AAT_like"/>
    <property type="match status" value="1"/>
</dbReference>
<dbReference type="FunFam" id="3.40.640.10:FF:000024">
    <property type="entry name" value="Kynurenine--oxoglutarate transaminase 3"/>
    <property type="match status" value="1"/>
</dbReference>
<dbReference type="Gene3D" id="3.90.1150.10">
    <property type="entry name" value="Aspartate Aminotransferase, domain 1"/>
    <property type="match status" value="1"/>
</dbReference>
<dbReference type="Gene3D" id="3.40.640.10">
    <property type="entry name" value="Type I PLP-dependent aspartate aminotransferase-like (Major domain)"/>
    <property type="match status" value="1"/>
</dbReference>
<dbReference type="InterPro" id="IPR004839">
    <property type="entry name" value="Aminotransferase_I/II_large"/>
</dbReference>
<dbReference type="InterPro" id="IPR051326">
    <property type="entry name" value="Kynurenine-oxoglutarate_AT"/>
</dbReference>
<dbReference type="InterPro" id="IPR004838">
    <property type="entry name" value="NHTrfase_class1_PyrdxlP-BS"/>
</dbReference>
<dbReference type="InterPro" id="IPR015424">
    <property type="entry name" value="PyrdxlP-dep_Trfase"/>
</dbReference>
<dbReference type="InterPro" id="IPR015421">
    <property type="entry name" value="PyrdxlP-dep_Trfase_major"/>
</dbReference>
<dbReference type="InterPro" id="IPR015422">
    <property type="entry name" value="PyrdxlP-dep_Trfase_small"/>
</dbReference>
<dbReference type="PANTHER" id="PTHR43807">
    <property type="entry name" value="FI04487P"/>
    <property type="match status" value="1"/>
</dbReference>
<dbReference type="PANTHER" id="PTHR43807:SF20">
    <property type="entry name" value="FI04487P"/>
    <property type="match status" value="1"/>
</dbReference>
<dbReference type="Pfam" id="PF00155">
    <property type="entry name" value="Aminotran_1_2"/>
    <property type="match status" value="1"/>
</dbReference>
<dbReference type="SUPFAM" id="SSF53383">
    <property type="entry name" value="PLP-dependent transferases"/>
    <property type="match status" value="1"/>
</dbReference>
<dbReference type="PROSITE" id="PS00105">
    <property type="entry name" value="AA_TRANSFER_CLASS_1"/>
    <property type="match status" value="1"/>
</dbReference>
<reference key="1">
    <citation type="journal article" date="1996" name="EMBO J.">
        <title>Complete nucleotide sequence of Saccharomyces cerevisiae chromosome X.</title>
        <authorList>
            <person name="Galibert F."/>
            <person name="Alexandraki D."/>
            <person name="Baur A."/>
            <person name="Boles E."/>
            <person name="Chalwatzis N."/>
            <person name="Chuat J.-C."/>
            <person name="Coster F."/>
            <person name="Cziepluch C."/>
            <person name="de Haan M."/>
            <person name="Domdey H."/>
            <person name="Durand P."/>
            <person name="Entian K.-D."/>
            <person name="Gatius M."/>
            <person name="Goffeau A."/>
            <person name="Grivell L.A."/>
            <person name="Hennemann A."/>
            <person name="Herbert C.J."/>
            <person name="Heumann K."/>
            <person name="Hilger F."/>
            <person name="Hollenberg C.P."/>
            <person name="Huang M.-E."/>
            <person name="Jacq C."/>
            <person name="Jauniaux J.-C."/>
            <person name="Katsoulou C."/>
            <person name="Kirchrath L."/>
            <person name="Kleine K."/>
            <person name="Kordes E."/>
            <person name="Koetter P."/>
            <person name="Liebl S."/>
            <person name="Louis E.J."/>
            <person name="Manus V."/>
            <person name="Mewes H.-W."/>
            <person name="Miosga T."/>
            <person name="Obermaier B."/>
            <person name="Perea J."/>
            <person name="Pohl T.M."/>
            <person name="Portetelle D."/>
            <person name="Pujol A."/>
            <person name="Purnelle B."/>
            <person name="Ramezani Rad M."/>
            <person name="Rasmussen S.W."/>
            <person name="Rose M."/>
            <person name="Rossau R."/>
            <person name="Schaaff-Gerstenschlaeger I."/>
            <person name="Smits P.H.M."/>
            <person name="Scarcez T."/>
            <person name="Soriano N."/>
            <person name="To Van D."/>
            <person name="Tzermia M."/>
            <person name="Van Broekhoven A."/>
            <person name="Vandenbol M."/>
            <person name="Wedler H."/>
            <person name="von Wettstein D."/>
            <person name="Wambutt R."/>
            <person name="Zagulski M."/>
            <person name="Zollner A."/>
            <person name="Karpfinger-Hartl L."/>
        </authorList>
    </citation>
    <scope>NUCLEOTIDE SEQUENCE [LARGE SCALE GENOMIC DNA]</scope>
    <source>
        <strain>ATCC 204508 / S288c</strain>
    </source>
</reference>
<reference key="2">
    <citation type="journal article" date="2014" name="G3 (Bethesda)">
        <title>The reference genome sequence of Saccharomyces cerevisiae: Then and now.</title>
        <authorList>
            <person name="Engel S.R."/>
            <person name="Dietrich F.S."/>
            <person name="Fisk D.G."/>
            <person name="Binkley G."/>
            <person name="Balakrishnan R."/>
            <person name="Costanzo M.C."/>
            <person name="Dwight S.S."/>
            <person name="Hitz B.C."/>
            <person name="Karra K."/>
            <person name="Nash R.S."/>
            <person name="Weng S."/>
            <person name="Wong E.D."/>
            <person name="Lloyd P."/>
            <person name="Skrzypek M.S."/>
            <person name="Miyasato S.R."/>
            <person name="Simison M."/>
            <person name="Cherry J.M."/>
        </authorList>
    </citation>
    <scope>GENOME REANNOTATION</scope>
    <source>
        <strain>ATCC 204508 / S288c</strain>
    </source>
</reference>
<reference key="3">
    <citation type="journal article" date="2003" name="Nature">
        <title>Global analysis of protein localization in budding yeast.</title>
        <authorList>
            <person name="Huh W.-K."/>
            <person name="Falvo J.V."/>
            <person name="Gerke L.C."/>
            <person name="Carroll A.S."/>
            <person name="Howson R.W."/>
            <person name="Weissman J.S."/>
            <person name="O'Shea E.K."/>
        </authorList>
    </citation>
    <scope>SUBCELLULAR LOCATION [LARGE SCALE ANALYSIS]</scope>
</reference>
<reference key="4">
    <citation type="journal article" date="2003" name="Nature">
        <title>Global analysis of protein expression in yeast.</title>
        <authorList>
            <person name="Ghaemmaghami S."/>
            <person name="Huh W.-K."/>
            <person name="Bower K."/>
            <person name="Howson R.W."/>
            <person name="Belle A."/>
            <person name="Dephoure N."/>
            <person name="O'Shea E.K."/>
            <person name="Weissman J.S."/>
        </authorList>
    </citation>
    <scope>LEVEL OF PROTEIN EXPRESSION [LARGE SCALE ANALYSIS]</scope>
</reference>
<reference key="5">
    <citation type="journal article" date="2006" name="J. Proteome Res.">
        <title>Toward the complete yeast mitochondrial proteome: multidimensional separation techniques for mitochondrial proteomics.</title>
        <authorList>
            <person name="Reinders J."/>
            <person name="Zahedi R.P."/>
            <person name="Pfanner N."/>
            <person name="Meisinger C."/>
            <person name="Sickmann A."/>
        </authorList>
    </citation>
    <scope>SUBCELLULAR LOCATION [LARGE SCALE ANALYSIS]</scope>
    <scope>IDENTIFICATION BY MASS SPECTROMETRY</scope>
</reference>
<reference key="6">
    <citation type="journal article" date="2008" name="Biochemistry">
        <title>Identification of formyl kynurenine formamidase and kynurenine aminotransferase from Saccharomyces cerevisiae using crystallographic, bioinformatic and biochemical evidence.</title>
        <authorList>
            <person name="Wogulis M."/>
            <person name="Chew E.R."/>
            <person name="Donohoue P.D."/>
            <person name="Wilson D.K."/>
        </authorList>
    </citation>
    <scope>X-RAY CRYSTALLOGRAPHY (2.0 ANGSTROMS)</scope>
    <scope>SUBUNIT</scope>
    <scope>IDENTIFICATION AS KYNURENINE AMINOTRANSFERASE</scope>
</reference>
<gene>
    <name type="primary">BNA3</name>
    <name type="ordered locus">YJL060W</name>
    <name type="ORF">J1138</name>
</gene>
<accession>P47039</accession>
<accession>D6VWC2</accession>
<proteinExistence type="evidence at protein level"/>
<comment type="function">
    <text evidence="1">Catalyzes the irreversible transamination of the L-tryptophan metabolite L-kynurenine to form kynurenic acid (KA).</text>
</comment>
<comment type="catalytic activity">
    <reaction>
        <text>L-kynurenine + 2-oxoglutarate = kynurenate + L-glutamate + H2O</text>
        <dbReference type="Rhea" id="RHEA:65560"/>
        <dbReference type="ChEBI" id="CHEBI:15377"/>
        <dbReference type="ChEBI" id="CHEBI:16810"/>
        <dbReference type="ChEBI" id="CHEBI:29985"/>
        <dbReference type="ChEBI" id="CHEBI:57959"/>
        <dbReference type="ChEBI" id="CHEBI:58454"/>
        <dbReference type="EC" id="2.6.1.7"/>
    </reaction>
</comment>
<comment type="cofactor">
    <cofactor evidence="6">
        <name>pyridoxal 5'-phosphate</name>
        <dbReference type="ChEBI" id="CHEBI:597326"/>
    </cofactor>
</comment>
<comment type="pathway">
    <text>Amino-acid degradation; L-kynurenine degradation; kynurenate from L-kynurenine: step 1/2.</text>
</comment>
<comment type="subunit">
    <text evidence="5">Homodimer.</text>
</comment>
<comment type="subcellular location">
    <subcellularLocation>
        <location evidence="2">Cytoplasm</location>
    </subcellularLocation>
    <subcellularLocation>
        <location evidence="2 4">Mitochondrion</location>
    </subcellularLocation>
</comment>
<comment type="miscellaneous">
    <text evidence="3">Present with 1600 molecules/cell in log phase SD medium.</text>
</comment>
<comment type="similarity">
    <text evidence="6">Belongs to the class-I pyridoxal-phosphate-dependent aminotransferase family.</text>
</comment>
<keyword id="KW-0002">3D-structure</keyword>
<keyword id="KW-0032">Aminotransferase</keyword>
<keyword id="KW-0963">Cytoplasm</keyword>
<keyword id="KW-0496">Mitochondrion</keyword>
<keyword id="KW-0663">Pyridoxal phosphate</keyword>
<keyword id="KW-1185">Reference proteome</keyword>
<keyword id="KW-0808">Transferase</keyword>
<protein>
    <recommendedName>
        <fullName>Probable kynurenine--oxoglutarate transaminase BNA3</fullName>
        <ecNumber>2.6.1.7</ecNumber>
    </recommendedName>
    <alternativeName>
        <fullName>Biosynthesis of nicotinic acid protein 3</fullName>
    </alternativeName>
    <alternativeName>
        <fullName>Kynurenine aminotransferase</fullName>
    </alternativeName>
</protein>
<sequence length="444" mass="50082">MKQRFIRQFTNLMSTSRPKVVANKYFTSNTAKDVWSLTNEAAAKAANNSKNQGRELINLGQGFFSYSPPQFAIKEAQKALDIPMVNQYSPTRGRPSLINSLIKLYSPIYNTELKAENVTVTTGANEGILSCLMGLLNAGDEVIVFEPFFDQYIPNIELCGGKVVYVPINPPKELDQRNTRGEEWTIDFEQFEKAITSKTKAVIINTPHNPIGKVFTREELTTLGNICVKHNVVIISDEVYEHLYFTDSFTRIATLSPEIGQLTLTVGSAGKSFAATGWRIGWVLSLNAELLSYAAKAHTRICFASPSPLQEACANSINDALKIGYFEKMRQEYINKFKIFTSIFDELGLPYTAPEGTYFVLVDFSKVKIPEDYPYPEEILNKGKDFRISHWLINELGVVAIPPTEFYIKEHEKAAENLLRFAVCKDDAYLENAVERLKLLKDYL</sequence>
<feature type="chain" id="PRO_0000123930" description="Probable kynurenine--oxoglutarate transaminase BNA3">
    <location>
        <begin position="1"/>
        <end position="444"/>
    </location>
</feature>
<feature type="modified residue" description="N6-(pyridoxal phosphate)lysine" evidence="1">
    <location>
        <position position="271"/>
    </location>
</feature>
<feature type="helix" evidence="7">
    <location>
        <begin position="24"/>
        <end position="27"/>
    </location>
</feature>
<feature type="helix" evidence="7">
    <location>
        <begin position="34"/>
        <end position="45"/>
    </location>
</feature>
<feature type="helix" evidence="7">
    <location>
        <begin position="70"/>
        <end position="79"/>
    </location>
</feature>
<feature type="helix" evidence="7">
    <location>
        <begin position="83"/>
        <end position="86"/>
    </location>
</feature>
<feature type="helix" evidence="7">
    <location>
        <begin position="95"/>
        <end position="105"/>
    </location>
</feature>
<feature type="turn" evidence="7">
    <location>
        <begin position="106"/>
        <end position="110"/>
    </location>
</feature>
<feature type="helix" evidence="7">
    <location>
        <begin position="115"/>
        <end position="117"/>
    </location>
</feature>
<feature type="strand" evidence="7">
    <location>
        <begin position="118"/>
        <end position="122"/>
    </location>
</feature>
<feature type="helix" evidence="7">
    <location>
        <begin position="123"/>
        <end position="135"/>
    </location>
</feature>
<feature type="strand" evidence="7">
    <location>
        <begin position="141"/>
        <end position="147"/>
    </location>
</feature>
<feature type="helix" evidence="7">
    <location>
        <begin position="152"/>
        <end position="158"/>
    </location>
</feature>
<feature type="strand" evidence="7">
    <location>
        <begin position="162"/>
        <end position="169"/>
    </location>
</feature>
<feature type="helix" evidence="7">
    <location>
        <begin position="172"/>
        <end position="175"/>
    </location>
</feature>
<feature type="strand" evidence="7">
    <location>
        <begin position="184"/>
        <end position="186"/>
    </location>
</feature>
<feature type="helix" evidence="7">
    <location>
        <begin position="188"/>
        <end position="192"/>
    </location>
</feature>
<feature type="strand" evidence="7">
    <location>
        <begin position="199"/>
        <end position="207"/>
    </location>
</feature>
<feature type="turn" evidence="7">
    <location>
        <begin position="209"/>
        <end position="211"/>
    </location>
</feature>
<feature type="helix" evidence="7">
    <location>
        <begin position="217"/>
        <end position="229"/>
    </location>
</feature>
<feature type="strand" evidence="7">
    <location>
        <begin position="233"/>
        <end position="237"/>
    </location>
</feature>
<feature type="turn" evidence="7">
    <location>
        <begin position="239"/>
        <end position="242"/>
    </location>
</feature>
<feature type="helix" evidence="7">
    <location>
        <begin position="252"/>
        <end position="254"/>
    </location>
</feature>
<feature type="helix" evidence="7">
    <location>
        <begin position="257"/>
        <end position="260"/>
    </location>
</feature>
<feature type="strand" evidence="7">
    <location>
        <begin position="263"/>
        <end position="268"/>
    </location>
</feature>
<feature type="strand" evidence="7">
    <location>
        <begin position="281"/>
        <end position="284"/>
    </location>
</feature>
<feature type="helix" evidence="7">
    <location>
        <begin position="288"/>
        <end position="301"/>
    </location>
</feature>
<feature type="helix" evidence="7">
    <location>
        <begin position="307"/>
        <end position="323"/>
    </location>
</feature>
<feature type="helix" evidence="7">
    <location>
        <begin position="325"/>
        <end position="347"/>
    </location>
</feature>
<feature type="strand" evidence="7">
    <location>
        <begin position="355"/>
        <end position="363"/>
    </location>
</feature>
<feature type="helix" evidence="7">
    <location>
        <begin position="377"/>
        <end position="379"/>
    </location>
</feature>
<feature type="strand" evidence="7">
    <location>
        <begin position="380"/>
        <end position="382"/>
    </location>
</feature>
<feature type="helix" evidence="7">
    <location>
        <begin position="384"/>
        <end position="395"/>
    </location>
</feature>
<feature type="helix" evidence="7">
    <location>
        <begin position="403"/>
        <end position="406"/>
    </location>
</feature>
<feature type="helix" evidence="7">
    <location>
        <begin position="409"/>
        <end position="415"/>
    </location>
</feature>
<feature type="strand" evidence="7">
    <location>
        <begin position="418"/>
        <end position="422"/>
    </location>
</feature>
<feature type="helix" evidence="7">
    <location>
        <begin position="427"/>
        <end position="436"/>
    </location>
</feature>
<feature type="helix" evidence="7">
    <location>
        <begin position="437"/>
        <end position="441"/>
    </location>
</feature>
<organism>
    <name type="scientific">Saccharomyces cerevisiae (strain ATCC 204508 / S288c)</name>
    <name type="common">Baker's yeast</name>
    <dbReference type="NCBI Taxonomy" id="559292"/>
    <lineage>
        <taxon>Eukaryota</taxon>
        <taxon>Fungi</taxon>
        <taxon>Dikarya</taxon>
        <taxon>Ascomycota</taxon>
        <taxon>Saccharomycotina</taxon>
        <taxon>Saccharomycetes</taxon>
        <taxon>Saccharomycetales</taxon>
        <taxon>Saccharomycetaceae</taxon>
        <taxon>Saccharomyces</taxon>
    </lineage>
</organism>
<evidence type="ECO:0000250" key="1"/>
<evidence type="ECO:0000269" key="2">
    <source>
    </source>
</evidence>
<evidence type="ECO:0000269" key="3">
    <source>
    </source>
</evidence>
<evidence type="ECO:0000269" key="4">
    <source>
    </source>
</evidence>
<evidence type="ECO:0000269" key="5">
    <source>
    </source>
</evidence>
<evidence type="ECO:0000305" key="6"/>
<evidence type="ECO:0007829" key="7">
    <source>
        <dbReference type="PDB" id="3B46"/>
    </source>
</evidence>
<name>BNA3_YEAST</name>